<organism>
    <name type="scientific">Prochlorococcus marinus (strain MIT 9303)</name>
    <dbReference type="NCBI Taxonomy" id="59922"/>
    <lineage>
        <taxon>Bacteria</taxon>
        <taxon>Bacillati</taxon>
        <taxon>Cyanobacteriota</taxon>
        <taxon>Cyanophyceae</taxon>
        <taxon>Synechococcales</taxon>
        <taxon>Prochlorococcaceae</taxon>
        <taxon>Prochlorococcus</taxon>
    </lineage>
</organism>
<proteinExistence type="inferred from homology"/>
<protein>
    <recommendedName>
        <fullName evidence="1">Cytochrome b559 subunit beta</fullName>
    </recommendedName>
    <alternativeName>
        <fullName evidence="1">PSII reaction center subunit VI</fullName>
    </alternativeName>
</protein>
<evidence type="ECO:0000255" key="1">
    <source>
        <dbReference type="HAMAP-Rule" id="MF_00643"/>
    </source>
</evidence>
<evidence type="ECO:0000305" key="2"/>
<sequence length="49" mass="5441">MAQSSSAPLQALNVRVYPIFTVRWLAVHVLGVPTVFFLGAITAMQLIRR</sequence>
<comment type="function">
    <text evidence="1">This b-type cytochrome is tightly associated with the reaction center of photosystem II (PSII). PSII is a light-driven water:plastoquinone oxidoreductase that uses light energy to abstract electrons from H(2)O, generating O(2) and a proton gradient subsequently used for ATP formation. It consists of a core antenna complex that captures photons, and an electron transfer chain that converts photonic excitation into a charge separation.</text>
</comment>
<comment type="cofactor">
    <cofactor evidence="1">
        <name>heme b</name>
        <dbReference type="ChEBI" id="CHEBI:60344"/>
    </cofactor>
    <text evidence="1">With its partner (PsbE) binds heme. PSII binds additional chlorophylls, carotenoids and specific lipids.</text>
</comment>
<comment type="subunit">
    <text evidence="2">Heterodimer of an alpha subunit and a beta subunit. PSII is composed of 1 copy each of membrane proteins PsbA, PsbB, PsbC, PsbD, PsbE, PsbF, PsbH, PsbI, PsbJ, PsbK, PsbL, PsbM, PsbT, PsbX, PsbY, Psb30/Ycf12, peripheral proteins PsbO, CyanoQ (PsbQ), PsbU, PsbV and a large number of cofactors. It forms dimeric complexes.</text>
</comment>
<comment type="subcellular location">
    <subcellularLocation>
        <location evidence="1">Cellular thylakoid membrane</location>
        <topology evidence="1">Single-pass membrane protein</topology>
    </subcellularLocation>
</comment>
<comment type="similarity">
    <text evidence="1">Belongs to the PsbE/PsbF family.</text>
</comment>
<feature type="chain" id="PRO_1000056937" description="Cytochrome b559 subunit beta">
    <location>
        <begin position="1"/>
        <end position="49"/>
    </location>
</feature>
<feature type="transmembrane region" description="Helical" evidence="1">
    <location>
        <begin position="24"/>
        <end position="40"/>
    </location>
</feature>
<feature type="binding site" description="axial binding residue" evidence="1">
    <location>
        <position position="28"/>
    </location>
    <ligand>
        <name>heme</name>
        <dbReference type="ChEBI" id="CHEBI:30413"/>
        <note>ligand shared with alpha subunit</note>
    </ligand>
    <ligandPart>
        <name>Fe</name>
        <dbReference type="ChEBI" id="CHEBI:18248"/>
    </ligandPart>
</feature>
<gene>
    <name evidence="1" type="primary">psbF</name>
    <name type="ordered locus">P9303_25301</name>
</gene>
<reference key="1">
    <citation type="journal article" date="2007" name="PLoS Genet.">
        <title>Patterns and implications of gene gain and loss in the evolution of Prochlorococcus.</title>
        <authorList>
            <person name="Kettler G.C."/>
            <person name="Martiny A.C."/>
            <person name="Huang K."/>
            <person name="Zucker J."/>
            <person name="Coleman M.L."/>
            <person name="Rodrigue S."/>
            <person name="Chen F."/>
            <person name="Lapidus A."/>
            <person name="Ferriera S."/>
            <person name="Johnson J."/>
            <person name="Steglich C."/>
            <person name="Church G.M."/>
            <person name="Richardson P."/>
            <person name="Chisholm S.W."/>
        </authorList>
    </citation>
    <scope>NUCLEOTIDE SEQUENCE [LARGE SCALE GENOMIC DNA]</scope>
    <source>
        <strain>MIT 9303</strain>
    </source>
</reference>
<name>PSBF_PROM3</name>
<accession>A2CCQ1</accession>
<dbReference type="EMBL" id="CP000554">
    <property type="protein sequence ID" value="ABM79261.1"/>
    <property type="molecule type" value="Genomic_DNA"/>
</dbReference>
<dbReference type="RefSeq" id="WP_011131263.1">
    <property type="nucleotide sequence ID" value="NC_008820.1"/>
</dbReference>
<dbReference type="STRING" id="59922.P9303_25301"/>
<dbReference type="KEGG" id="pmf:P9303_25301"/>
<dbReference type="HOGENOM" id="CLU_211753_1_0_3"/>
<dbReference type="BioCyc" id="PMAR59922:G1G80-2221-MONOMER"/>
<dbReference type="Proteomes" id="UP000002274">
    <property type="component" value="Chromosome"/>
</dbReference>
<dbReference type="GO" id="GO:0009539">
    <property type="term" value="C:photosystem II reaction center"/>
    <property type="evidence" value="ECO:0007669"/>
    <property type="project" value="InterPro"/>
</dbReference>
<dbReference type="GO" id="GO:0031676">
    <property type="term" value="C:plasma membrane-derived thylakoid membrane"/>
    <property type="evidence" value="ECO:0007669"/>
    <property type="project" value="UniProtKB-SubCell"/>
</dbReference>
<dbReference type="GO" id="GO:0009055">
    <property type="term" value="F:electron transfer activity"/>
    <property type="evidence" value="ECO:0007669"/>
    <property type="project" value="UniProtKB-UniRule"/>
</dbReference>
<dbReference type="GO" id="GO:0020037">
    <property type="term" value="F:heme binding"/>
    <property type="evidence" value="ECO:0007669"/>
    <property type="project" value="InterPro"/>
</dbReference>
<dbReference type="GO" id="GO:0005506">
    <property type="term" value="F:iron ion binding"/>
    <property type="evidence" value="ECO:0007669"/>
    <property type="project" value="UniProtKB-UniRule"/>
</dbReference>
<dbReference type="GO" id="GO:0009767">
    <property type="term" value="P:photosynthetic electron transport chain"/>
    <property type="evidence" value="ECO:0007669"/>
    <property type="project" value="InterPro"/>
</dbReference>
<dbReference type="HAMAP" id="MF_00643">
    <property type="entry name" value="PSII_PsbF"/>
    <property type="match status" value="1"/>
</dbReference>
<dbReference type="InterPro" id="IPR006241">
    <property type="entry name" value="PSII_cyt_b559_bsu"/>
</dbReference>
<dbReference type="InterPro" id="IPR006216">
    <property type="entry name" value="PSII_cyt_b559_CS"/>
</dbReference>
<dbReference type="InterPro" id="IPR013081">
    <property type="entry name" value="PSII_cyt_b559_N"/>
</dbReference>
<dbReference type="NCBIfam" id="TIGR01333">
    <property type="entry name" value="cyt_b559_beta"/>
    <property type="match status" value="1"/>
</dbReference>
<dbReference type="Pfam" id="PF00283">
    <property type="entry name" value="Cytochrom_B559"/>
    <property type="match status" value="1"/>
</dbReference>
<dbReference type="PIRSF" id="PIRSF000037">
    <property type="entry name" value="PsbF"/>
    <property type="match status" value="1"/>
</dbReference>
<dbReference type="SUPFAM" id="SSF161045">
    <property type="entry name" value="Cytochrome b559 subunits"/>
    <property type="match status" value="1"/>
</dbReference>
<dbReference type="PROSITE" id="PS00537">
    <property type="entry name" value="CYTOCHROME_B559"/>
    <property type="match status" value="1"/>
</dbReference>
<keyword id="KW-0249">Electron transport</keyword>
<keyword id="KW-0349">Heme</keyword>
<keyword id="KW-0408">Iron</keyword>
<keyword id="KW-0472">Membrane</keyword>
<keyword id="KW-0479">Metal-binding</keyword>
<keyword id="KW-0602">Photosynthesis</keyword>
<keyword id="KW-0604">Photosystem II</keyword>
<keyword id="KW-0793">Thylakoid</keyword>
<keyword id="KW-0812">Transmembrane</keyword>
<keyword id="KW-1133">Transmembrane helix</keyword>
<keyword id="KW-0813">Transport</keyword>